<keyword id="KW-0249">Electron transport</keyword>
<keyword id="KW-0472">Membrane</keyword>
<keyword id="KW-0496">Mitochondrion</keyword>
<keyword id="KW-0999">Mitochondrion inner membrane</keyword>
<keyword id="KW-0520">NAD</keyword>
<keyword id="KW-1185">Reference proteome</keyword>
<keyword id="KW-0679">Respiratory chain</keyword>
<keyword id="KW-1278">Translocase</keyword>
<keyword id="KW-0812">Transmembrane</keyword>
<keyword id="KW-1133">Transmembrane helix</keyword>
<keyword id="KW-0813">Transport</keyword>
<keyword id="KW-0830">Ubiquinone</keyword>
<evidence type="ECO:0000250" key="1"/>
<evidence type="ECO:0000255" key="2"/>
<evidence type="ECO:0000305" key="3"/>
<evidence type="ECO:0000312" key="4">
    <source>
        <dbReference type="CGD" id="CAL0000188422"/>
    </source>
</evidence>
<dbReference type="EC" id="7.1.1.2"/>
<dbReference type="EMBL" id="AF285261">
    <property type="protein sequence ID" value="AAG59597.2"/>
    <property type="molecule type" value="Genomic_DNA"/>
</dbReference>
<dbReference type="RefSeq" id="NP_075040.2">
    <property type="nucleotide sequence ID" value="NC_002653.1"/>
</dbReference>
<dbReference type="SMR" id="Q9B8C9"/>
<dbReference type="STRING" id="237561.Q9B8C9"/>
<dbReference type="EnsemblFungi" id="CM_00380W-T">
    <property type="protein sequence ID" value="CM_00380W-T-p1"/>
    <property type="gene ID" value="CM_00380W"/>
</dbReference>
<dbReference type="GeneID" id="802564"/>
<dbReference type="KEGG" id="cal:CaalfMp13"/>
<dbReference type="CGD" id="CAL0000188422">
    <property type="gene designation" value="NAD5"/>
</dbReference>
<dbReference type="VEuPathDB" id="FungiDB:CM_00380W"/>
<dbReference type="InParanoid" id="Q9B8C9"/>
<dbReference type="Proteomes" id="UP000000559">
    <property type="component" value="Mitochondrion"/>
</dbReference>
<dbReference type="GO" id="GO:0005743">
    <property type="term" value="C:mitochondrial inner membrane"/>
    <property type="evidence" value="ECO:0007669"/>
    <property type="project" value="UniProtKB-SubCell"/>
</dbReference>
<dbReference type="GO" id="GO:0045271">
    <property type="term" value="C:respiratory chain complex I"/>
    <property type="evidence" value="ECO:0000250"/>
    <property type="project" value="CGD"/>
</dbReference>
<dbReference type="GO" id="GO:0008137">
    <property type="term" value="F:NADH dehydrogenase (ubiquinone) activity"/>
    <property type="evidence" value="ECO:0000250"/>
    <property type="project" value="CGD"/>
</dbReference>
<dbReference type="GO" id="GO:0015990">
    <property type="term" value="P:electron transport coupled proton transport"/>
    <property type="evidence" value="ECO:0000318"/>
    <property type="project" value="GO_Central"/>
</dbReference>
<dbReference type="GO" id="GO:0006120">
    <property type="term" value="P:mitochondrial electron transport, NADH to ubiquinone"/>
    <property type="evidence" value="ECO:0000250"/>
    <property type="project" value="CGD"/>
</dbReference>
<dbReference type="InterPro" id="IPR018393">
    <property type="entry name" value="NADHpl_OxRdtase_5_subgr"/>
</dbReference>
<dbReference type="InterPro" id="IPR001750">
    <property type="entry name" value="ND/Mrp_TM"/>
</dbReference>
<dbReference type="InterPro" id="IPR003945">
    <property type="entry name" value="NU5C-like"/>
</dbReference>
<dbReference type="InterPro" id="IPR001516">
    <property type="entry name" value="Proton_antipo_N"/>
</dbReference>
<dbReference type="NCBIfam" id="TIGR01974">
    <property type="entry name" value="NDH_I_L"/>
    <property type="match status" value="1"/>
</dbReference>
<dbReference type="PANTHER" id="PTHR42829">
    <property type="entry name" value="NADH-UBIQUINONE OXIDOREDUCTASE CHAIN 5"/>
    <property type="match status" value="1"/>
</dbReference>
<dbReference type="PANTHER" id="PTHR42829:SF2">
    <property type="entry name" value="NADH-UBIQUINONE OXIDOREDUCTASE CHAIN 5"/>
    <property type="match status" value="1"/>
</dbReference>
<dbReference type="Pfam" id="PF00361">
    <property type="entry name" value="Proton_antipo_M"/>
    <property type="match status" value="1"/>
</dbReference>
<dbReference type="Pfam" id="PF00662">
    <property type="entry name" value="Proton_antipo_N"/>
    <property type="match status" value="1"/>
</dbReference>
<dbReference type="PRINTS" id="PR01434">
    <property type="entry name" value="NADHDHGNASE5"/>
</dbReference>
<organism>
    <name type="scientific">Candida albicans (strain SC5314 / ATCC MYA-2876)</name>
    <name type="common">Yeast</name>
    <dbReference type="NCBI Taxonomy" id="237561"/>
    <lineage>
        <taxon>Eukaryota</taxon>
        <taxon>Fungi</taxon>
        <taxon>Dikarya</taxon>
        <taxon>Ascomycota</taxon>
        <taxon>Saccharomycotina</taxon>
        <taxon>Pichiomycetes</taxon>
        <taxon>Debaryomycetaceae</taxon>
        <taxon>Candida/Lodderomyces clade</taxon>
        <taxon>Candida</taxon>
    </lineage>
</organism>
<geneLocation type="mitochondrion"/>
<sequence length="552" mass="61520">MQLLYYIYEEPVTIHLGTWISLGDIVIPFGLSLDSLAMTVIVPVGIITLCVLAYAIEYMSHDPNRNRFYIILSIFAVFMTILVVSDNYLMMFIGWEFVGVISYLLISFWSTRITAMKSALSAILLNRMGDTFFVIALGLMINYYHAVDYDTIALVTPYMNTFLLNTLGLLLLLAATAKSAQLGLHAWLLQAMEGPTPVSALLHAATMVCAGVYVLVRSYMILEYTPTMLLIICWLGGLTTLVSGLIAIVTNDIKRVIALSTMSQLSIMVLAIGISAYDLAIYHLYCHAFFKALLFMGAGSVIHSFVAESQDMRKYGGLIEYLPFSYTAILIASLSLMAIPGLTGYYSKDIIIESLYGSYTLSGYILYYIAVGSATLTSIYSLRVLYLTFMGVPNANKASYSHIHESLGMMIPMIVLVIYSIFIGYSRDSVIGHYALSLPANNGFIETEYTLPAYIKLLPLILGLTLSAILVYVYEYAYKINRSAVYDYLNNRIYYEQILNNIVIRNTLRLGGYMNAYIDQGLLKVLGSTGVSRAVTYINVIVIINILYLFFI</sequence>
<protein>
    <recommendedName>
        <fullName>NADH-ubiquinone oxidoreductase chain 5</fullName>
        <ecNumber>7.1.1.2</ecNumber>
    </recommendedName>
    <alternativeName>
        <fullName>NADH dehydrogenase subunit 5</fullName>
    </alternativeName>
</protein>
<feature type="chain" id="PRO_0000356879" description="NADH-ubiquinone oxidoreductase chain 5">
    <location>
        <begin position="1"/>
        <end position="552"/>
    </location>
</feature>
<feature type="transmembrane region" description="Helical" evidence="2">
    <location>
        <begin position="11"/>
        <end position="31"/>
    </location>
</feature>
<feature type="transmembrane region" description="Helical" evidence="2">
    <location>
        <begin position="36"/>
        <end position="56"/>
    </location>
</feature>
<feature type="transmembrane region" description="Helical" evidence="2">
    <location>
        <begin position="68"/>
        <end position="88"/>
    </location>
</feature>
<feature type="transmembrane region" description="Helical" evidence="2">
    <location>
        <begin position="89"/>
        <end position="109"/>
    </location>
</feature>
<feature type="transmembrane region" description="Helical" evidence="2">
    <location>
        <begin position="121"/>
        <end position="141"/>
    </location>
</feature>
<feature type="transmembrane region" description="Helical" evidence="2">
    <location>
        <begin position="152"/>
        <end position="172"/>
    </location>
</feature>
<feature type="transmembrane region" description="Helical" evidence="2">
    <location>
        <begin position="196"/>
        <end position="216"/>
    </location>
</feature>
<feature type="transmembrane region" description="Helical" evidence="2">
    <location>
        <begin position="229"/>
        <end position="249"/>
    </location>
</feature>
<feature type="transmembrane region" description="Helical" evidence="2">
    <location>
        <begin position="256"/>
        <end position="274"/>
    </location>
</feature>
<feature type="transmembrane region" description="Helical" evidence="2">
    <location>
        <begin position="287"/>
        <end position="307"/>
    </location>
</feature>
<feature type="transmembrane region" description="Helical" evidence="2">
    <location>
        <begin position="322"/>
        <end position="342"/>
    </location>
</feature>
<feature type="transmembrane region" description="Helical" evidence="2">
    <location>
        <begin position="365"/>
        <end position="386"/>
    </location>
</feature>
<feature type="transmembrane region" description="Helical" evidence="2">
    <location>
        <begin position="406"/>
        <end position="426"/>
    </location>
</feature>
<feature type="transmembrane region" description="Helical" evidence="2">
    <location>
        <begin position="453"/>
        <end position="473"/>
    </location>
</feature>
<feature type="transmembrane region" description="Helical" evidence="2">
    <location>
        <begin position="532"/>
        <end position="552"/>
    </location>
</feature>
<gene>
    <name type="primary">NAD5</name>
    <name evidence="4" type="ordered locus">CM_00380W</name>
    <name type="ORF">CaalfMp13</name>
</gene>
<accession>Q9B8C9</accession>
<name>NU5M_CANAL</name>
<proteinExistence type="inferred from homology"/>
<comment type="function">
    <text evidence="1">Core subunit of the mitochondrial membrane respiratory chain NADH dehydrogenase (Complex I) that is believed to belong to the minimal assembly required for catalysis. Complex I functions in the transfer of electrons from NADH to the respiratory chain. The immediate electron acceptor for the enzyme is believed to be ubiquinone (By similarity).</text>
</comment>
<comment type="catalytic activity">
    <reaction>
        <text>a ubiquinone + NADH + 5 H(+)(in) = a ubiquinol + NAD(+) + 4 H(+)(out)</text>
        <dbReference type="Rhea" id="RHEA:29091"/>
        <dbReference type="Rhea" id="RHEA-COMP:9565"/>
        <dbReference type="Rhea" id="RHEA-COMP:9566"/>
        <dbReference type="ChEBI" id="CHEBI:15378"/>
        <dbReference type="ChEBI" id="CHEBI:16389"/>
        <dbReference type="ChEBI" id="CHEBI:17976"/>
        <dbReference type="ChEBI" id="CHEBI:57540"/>
        <dbReference type="ChEBI" id="CHEBI:57945"/>
        <dbReference type="EC" id="7.1.1.2"/>
    </reaction>
</comment>
<comment type="subcellular location">
    <subcellularLocation>
        <location evidence="1">Mitochondrion inner membrane</location>
        <topology evidence="1">Multi-pass membrane protein</topology>
    </subcellularLocation>
</comment>
<comment type="similarity">
    <text evidence="3">Belongs to the complex I subunit 5 family.</text>
</comment>
<reference key="1">
    <citation type="journal article" date="2001" name="J. Bacteriol.">
        <title>Infrequent genetic exchange and recombination in the mitochondrial genome of Candida albicans.</title>
        <authorList>
            <person name="Anderson J.B."/>
            <person name="Wickens C."/>
            <person name="Khan M."/>
            <person name="Cowen L.E."/>
            <person name="Federspiel N.A."/>
            <person name="Jones T."/>
            <person name="Kohn L.M."/>
        </authorList>
    </citation>
    <scope>NUCLEOTIDE SEQUENCE [LARGE SCALE GENOMIC DNA]</scope>
    <source>
        <strain>SC5314 / ATCC MYA-2876</strain>
    </source>
</reference>